<evidence type="ECO:0000255" key="1">
    <source>
        <dbReference type="HAMAP-Rule" id="MF_01343"/>
    </source>
</evidence>
<evidence type="ECO:0000305" key="2"/>
<proteinExistence type="inferred from homology"/>
<keyword id="KW-1185">Reference proteome</keyword>
<keyword id="KW-0687">Ribonucleoprotein</keyword>
<keyword id="KW-0689">Ribosomal protein</keyword>
<keyword id="KW-0694">RNA-binding</keyword>
<keyword id="KW-0699">rRNA-binding</keyword>
<protein>
    <recommendedName>
        <fullName evidence="1">Small ribosomal subunit protein uS15</fullName>
    </recommendedName>
    <alternativeName>
        <fullName evidence="2">30S ribosomal protein S15</fullName>
    </alternativeName>
</protein>
<comment type="function">
    <text evidence="1">One of the primary rRNA binding proteins, it binds directly to 16S rRNA where it helps nucleate assembly of the platform of the 30S subunit by binding and bridging several RNA helices of the 16S rRNA.</text>
</comment>
<comment type="function">
    <text evidence="1">Forms an intersubunit bridge (bridge B4) with the 23S rRNA of the 50S subunit in the ribosome.</text>
</comment>
<comment type="subunit">
    <text evidence="1">Part of the 30S ribosomal subunit. Forms a bridge to the 50S subunit in the 70S ribosome, contacting the 23S rRNA.</text>
</comment>
<comment type="similarity">
    <text evidence="1">Belongs to the universal ribosomal protein uS15 family.</text>
</comment>
<name>RS15_STRP2</name>
<reference key="1">
    <citation type="journal article" date="2007" name="J. Bacteriol.">
        <title>Genome sequence of Avery's virulent serotype 2 strain D39 of Streptococcus pneumoniae and comparison with that of unencapsulated laboratory strain R6.</title>
        <authorList>
            <person name="Lanie J.A."/>
            <person name="Ng W.-L."/>
            <person name="Kazmierczak K.M."/>
            <person name="Andrzejewski T.M."/>
            <person name="Davidsen T.M."/>
            <person name="Wayne K.J."/>
            <person name="Tettelin H."/>
            <person name="Glass J.I."/>
            <person name="Winkler M.E."/>
        </authorList>
    </citation>
    <scope>NUCLEOTIDE SEQUENCE [LARGE SCALE GENOMIC DNA]</scope>
    <source>
        <strain>D39 / NCTC 7466</strain>
    </source>
</reference>
<gene>
    <name evidence="1" type="primary">rpsO</name>
    <name type="ordered locus">SPD_1439</name>
</gene>
<dbReference type="EMBL" id="CP000410">
    <property type="protein sequence ID" value="ABJ55446.1"/>
    <property type="molecule type" value="Genomic_DNA"/>
</dbReference>
<dbReference type="RefSeq" id="WP_001018251.1">
    <property type="nucleotide sequence ID" value="NZ_JAMLJR010000013.1"/>
</dbReference>
<dbReference type="SMR" id="Q04JE2"/>
<dbReference type="PaxDb" id="373153-SPD_1439"/>
<dbReference type="GeneID" id="93847676"/>
<dbReference type="KEGG" id="spd:SPD_1439"/>
<dbReference type="eggNOG" id="COG0184">
    <property type="taxonomic scope" value="Bacteria"/>
</dbReference>
<dbReference type="HOGENOM" id="CLU_148518_0_0_9"/>
<dbReference type="BioCyc" id="SPNE373153:G1G6V-1552-MONOMER"/>
<dbReference type="Proteomes" id="UP000001452">
    <property type="component" value="Chromosome"/>
</dbReference>
<dbReference type="GO" id="GO:0022627">
    <property type="term" value="C:cytosolic small ribosomal subunit"/>
    <property type="evidence" value="ECO:0007669"/>
    <property type="project" value="TreeGrafter"/>
</dbReference>
<dbReference type="GO" id="GO:0019843">
    <property type="term" value="F:rRNA binding"/>
    <property type="evidence" value="ECO:0007669"/>
    <property type="project" value="UniProtKB-UniRule"/>
</dbReference>
<dbReference type="GO" id="GO:0003735">
    <property type="term" value="F:structural constituent of ribosome"/>
    <property type="evidence" value="ECO:0007669"/>
    <property type="project" value="InterPro"/>
</dbReference>
<dbReference type="GO" id="GO:0006412">
    <property type="term" value="P:translation"/>
    <property type="evidence" value="ECO:0007669"/>
    <property type="project" value="UniProtKB-UniRule"/>
</dbReference>
<dbReference type="CDD" id="cd00353">
    <property type="entry name" value="Ribosomal_S15p_S13e"/>
    <property type="match status" value="1"/>
</dbReference>
<dbReference type="FunFam" id="1.10.287.10:FF:000002">
    <property type="entry name" value="30S ribosomal protein S15"/>
    <property type="match status" value="1"/>
</dbReference>
<dbReference type="Gene3D" id="6.10.250.3130">
    <property type="match status" value="1"/>
</dbReference>
<dbReference type="Gene3D" id="1.10.287.10">
    <property type="entry name" value="S15/NS1, RNA-binding"/>
    <property type="match status" value="1"/>
</dbReference>
<dbReference type="HAMAP" id="MF_01343_B">
    <property type="entry name" value="Ribosomal_uS15_B"/>
    <property type="match status" value="1"/>
</dbReference>
<dbReference type="InterPro" id="IPR000589">
    <property type="entry name" value="Ribosomal_uS15"/>
</dbReference>
<dbReference type="InterPro" id="IPR005290">
    <property type="entry name" value="Ribosomal_uS15_bac-type"/>
</dbReference>
<dbReference type="InterPro" id="IPR009068">
    <property type="entry name" value="uS15_NS1_RNA-bd_sf"/>
</dbReference>
<dbReference type="NCBIfam" id="TIGR00952">
    <property type="entry name" value="S15_bact"/>
    <property type="match status" value="1"/>
</dbReference>
<dbReference type="PANTHER" id="PTHR23321">
    <property type="entry name" value="RIBOSOMAL PROTEIN S15, BACTERIAL AND ORGANELLAR"/>
    <property type="match status" value="1"/>
</dbReference>
<dbReference type="PANTHER" id="PTHR23321:SF26">
    <property type="entry name" value="SMALL RIBOSOMAL SUBUNIT PROTEIN US15M"/>
    <property type="match status" value="1"/>
</dbReference>
<dbReference type="Pfam" id="PF00312">
    <property type="entry name" value="Ribosomal_S15"/>
    <property type="match status" value="1"/>
</dbReference>
<dbReference type="SMART" id="SM01387">
    <property type="entry name" value="Ribosomal_S15"/>
    <property type="match status" value="1"/>
</dbReference>
<dbReference type="SUPFAM" id="SSF47060">
    <property type="entry name" value="S15/NS1 RNA-binding domain"/>
    <property type="match status" value="1"/>
</dbReference>
<dbReference type="PROSITE" id="PS00362">
    <property type="entry name" value="RIBOSOMAL_S15"/>
    <property type="match status" value="1"/>
</dbReference>
<organism>
    <name type="scientific">Streptococcus pneumoniae serotype 2 (strain D39 / NCTC 7466)</name>
    <dbReference type="NCBI Taxonomy" id="373153"/>
    <lineage>
        <taxon>Bacteria</taxon>
        <taxon>Bacillati</taxon>
        <taxon>Bacillota</taxon>
        <taxon>Bacilli</taxon>
        <taxon>Lactobacillales</taxon>
        <taxon>Streptococcaceae</taxon>
        <taxon>Streptococcus</taxon>
    </lineage>
</organism>
<sequence length="89" mass="10535">MAISKEKKNEIIAQYARHEGDTGSVEVQVAVLTWEINHLNEHIKQHKKDHATYRGLMKKIGRRRNLLAYLRKNDVNRYRELINSLGLRR</sequence>
<feature type="chain" id="PRO_1000054880" description="Small ribosomal subunit protein uS15">
    <location>
        <begin position="1"/>
        <end position="89"/>
    </location>
</feature>
<accession>Q04JE2</accession>